<keyword id="KW-0378">Hydrolase</keyword>
<keyword id="KW-0507">mRNA processing</keyword>
<keyword id="KW-0539">Nucleus</keyword>
<keyword id="KW-0904">Protein phosphatase</keyword>
<keyword id="KW-1185">Reference proteome</keyword>
<reference key="1">
    <citation type="journal article" date="2006" name="Nature">
        <title>Human chromosome 11 DNA sequence and analysis including novel gene identification.</title>
        <authorList>
            <person name="Taylor T.D."/>
            <person name="Noguchi H."/>
            <person name="Totoki Y."/>
            <person name="Toyoda A."/>
            <person name="Kuroki Y."/>
            <person name="Dewar K."/>
            <person name="Lloyd C."/>
            <person name="Itoh T."/>
            <person name="Takeda T."/>
            <person name="Kim D.-W."/>
            <person name="She X."/>
            <person name="Barlow K.F."/>
            <person name="Bloom T."/>
            <person name="Bruford E."/>
            <person name="Chang J.L."/>
            <person name="Cuomo C.A."/>
            <person name="Eichler E."/>
            <person name="FitzGerald M.G."/>
            <person name="Jaffe D.B."/>
            <person name="LaButti K."/>
            <person name="Nicol R."/>
            <person name="Park H.-S."/>
            <person name="Seaman C."/>
            <person name="Sougnez C."/>
            <person name="Yang X."/>
            <person name="Zimmer A.R."/>
            <person name="Zody M.C."/>
            <person name="Birren B.W."/>
            <person name="Nusbaum C."/>
            <person name="Fujiyama A."/>
            <person name="Hattori M."/>
            <person name="Rogers J."/>
            <person name="Lander E.S."/>
            <person name="Sakaki Y."/>
        </authorList>
    </citation>
    <scope>NUCLEOTIDE SEQUENCE [LARGE SCALE GENOMIC DNA]</scope>
</reference>
<gene>
    <name evidence="3" type="primary">SSU72L2</name>
    <name evidence="3" type="synonym">SSU72P2</name>
</gene>
<protein>
    <recommendedName>
        <fullName evidence="2">RNA polymerase II subunit A C-terminal domain phosphatase SSU72 like protein 2</fullName>
    </recommendedName>
    <alternativeName>
        <fullName evidence="2">RNA polymerase II subunit A C-terminal domain phosphatase SSU72L2</fullName>
        <shortName>CTD phosphatase SSU72L2</shortName>
        <ecNumber evidence="1">3.1.3.16</ecNumber>
    </alternativeName>
</protein>
<dbReference type="EC" id="3.1.3.16" evidence="1"/>
<dbReference type="EMBL" id="AC018793">
    <property type="status" value="NOT_ANNOTATED_CDS"/>
    <property type="molecule type" value="Genomic_DNA"/>
</dbReference>
<dbReference type="RefSeq" id="NP_001400928.1">
    <property type="nucleotide sequence ID" value="NM_001413999.1"/>
</dbReference>
<dbReference type="SMR" id="A0A1W2PQD8"/>
<dbReference type="FunCoup" id="A0A1W2PQD8">
    <property type="interactions" value="260"/>
</dbReference>
<dbReference type="STRING" id="9606.ENSP00000491669"/>
<dbReference type="BioMuta" id="ENSG00000284306"/>
<dbReference type="MassIVE" id="A0A1W2PQD8"/>
<dbReference type="Ensembl" id="ENST00000640805.2">
    <property type="protein sequence ID" value="ENSP00000491669.1"/>
    <property type="gene ID" value="ENSG00000284306.2"/>
</dbReference>
<dbReference type="GeneID" id="390031"/>
<dbReference type="MANE-Select" id="ENST00000640805.2">
    <property type="protein sequence ID" value="ENSP00000491669.1"/>
    <property type="RefSeq nucleotide sequence ID" value="NM_001413999.1"/>
    <property type="RefSeq protein sequence ID" value="NP_001400928.1"/>
</dbReference>
<dbReference type="AGR" id="HGNC:43621"/>
<dbReference type="GeneCards" id="SSU72L2"/>
<dbReference type="HGNC" id="HGNC:43621">
    <property type="gene designation" value="SSU72L2"/>
</dbReference>
<dbReference type="VEuPathDB" id="HostDB:ENSG00000284306"/>
<dbReference type="GeneTree" id="ENSGT00390000010165"/>
<dbReference type="InParanoid" id="A0A1W2PQD8"/>
<dbReference type="OMA" id="HYTRNGM"/>
<dbReference type="PAN-GO" id="A0A1W2PQD8">
    <property type="GO annotations" value="5 GO annotations based on evolutionary models"/>
</dbReference>
<dbReference type="PRO" id="PR:A0A1W2PQD8"/>
<dbReference type="Proteomes" id="UP000005640">
    <property type="component" value="Chromosome 11"/>
</dbReference>
<dbReference type="RNAct" id="A0A1W2PQD8">
    <property type="molecule type" value="protein"/>
</dbReference>
<dbReference type="Bgee" id="ENSG00000284306">
    <property type="expression patterns" value="Expressed in lymph node and 13 other cell types or tissues"/>
</dbReference>
<dbReference type="GO" id="GO:0005847">
    <property type="term" value="C:mRNA cleavage and polyadenylation specificity factor complex"/>
    <property type="evidence" value="ECO:0000318"/>
    <property type="project" value="GO_Central"/>
</dbReference>
<dbReference type="GO" id="GO:0008420">
    <property type="term" value="F:RNA polymerase II CTD heptapeptide repeat phosphatase activity"/>
    <property type="evidence" value="ECO:0000318"/>
    <property type="project" value="GO_Central"/>
</dbReference>
<dbReference type="GO" id="GO:0006397">
    <property type="term" value="P:mRNA processing"/>
    <property type="evidence" value="ECO:0007669"/>
    <property type="project" value="UniProtKB-KW"/>
</dbReference>
<dbReference type="GO" id="GO:0006369">
    <property type="term" value="P:termination of RNA polymerase II transcription"/>
    <property type="evidence" value="ECO:0000318"/>
    <property type="project" value="GO_Central"/>
</dbReference>
<dbReference type="FunFam" id="3.40.50.2300:FF:000039">
    <property type="entry name" value="RNA polymerase II subunit A C-terminal domain phosphatase"/>
    <property type="match status" value="1"/>
</dbReference>
<dbReference type="FunFam" id="3.40.50.2300:FF:000066">
    <property type="entry name" value="RNA polymerase II subunit A C-terminal domain phosphatase SSU72"/>
    <property type="match status" value="1"/>
</dbReference>
<dbReference type="Gene3D" id="3.40.50.2300">
    <property type="match status" value="2"/>
</dbReference>
<dbReference type="InterPro" id="IPR036196">
    <property type="entry name" value="Ptyr_pPase_sf"/>
</dbReference>
<dbReference type="InterPro" id="IPR006811">
    <property type="entry name" value="RNA_pol_II_suA"/>
</dbReference>
<dbReference type="PANTHER" id="PTHR20383">
    <property type="entry name" value="RNA POLYMERASE II SUBUNIT A C-TERMINAL DOMAIN PHOSPHATASE"/>
    <property type="match status" value="1"/>
</dbReference>
<dbReference type="Pfam" id="PF04722">
    <property type="entry name" value="Ssu72"/>
    <property type="match status" value="1"/>
</dbReference>
<dbReference type="SUPFAM" id="SSF52788">
    <property type="entry name" value="Phosphotyrosine protein phosphatases I"/>
    <property type="match status" value="1"/>
</dbReference>
<accession>A0A1W2PQD8</accession>
<comment type="function">
    <text evidence="1">Protein phosphatase that catalyzes the dephosphorylation of the C-terminal domain of RNA polymerase II. Plays a role in RNA processing and termination.</text>
</comment>
<comment type="catalytic activity">
    <reaction evidence="1">
        <text>O-phospho-L-seryl-[protein] + H2O = L-seryl-[protein] + phosphate</text>
        <dbReference type="Rhea" id="RHEA:20629"/>
        <dbReference type="Rhea" id="RHEA-COMP:9863"/>
        <dbReference type="Rhea" id="RHEA-COMP:11604"/>
        <dbReference type="ChEBI" id="CHEBI:15377"/>
        <dbReference type="ChEBI" id="CHEBI:29999"/>
        <dbReference type="ChEBI" id="CHEBI:43474"/>
        <dbReference type="ChEBI" id="CHEBI:83421"/>
        <dbReference type="EC" id="3.1.3.16"/>
    </reaction>
</comment>
<comment type="catalytic activity">
    <reaction evidence="1">
        <text>O-phospho-L-threonyl-[protein] + H2O = L-threonyl-[protein] + phosphate</text>
        <dbReference type="Rhea" id="RHEA:47004"/>
        <dbReference type="Rhea" id="RHEA-COMP:11060"/>
        <dbReference type="Rhea" id="RHEA-COMP:11605"/>
        <dbReference type="ChEBI" id="CHEBI:15377"/>
        <dbReference type="ChEBI" id="CHEBI:30013"/>
        <dbReference type="ChEBI" id="CHEBI:43474"/>
        <dbReference type="ChEBI" id="CHEBI:61977"/>
        <dbReference type="EC" id="3.1.3.16"/>
    </reaction>
</comment>
<comment type="subcellular location">
    <subcellularLocation>
        <location evidence="1">Nucleus</location>
    </subcellularLocation>
</comment>
<comment type="similarity">
    <text evidence="2">Belongs to the SSU72 phosphatase family.</text>
</comment>
<sequence>MLSSTLRVAVVCVSNVNRSMEAHSILRKKGLSVRSFGTESHVRLPGPRPNRPVVYDFATTYKEMYNDLLRKDRECYTRNGILHILGRNERIKPGPERFQECTDFFDVIFTCEESVYDTVVEDLCSREQQTFQPVHVINMEIQDTLEDATLGAFLICEICQCLQQSDDMEDNLEELLLQMEEKAGKSFLHTVCFY</sequence>
<organism>
    <name type="scientific">Homo sapiens</name>
    <name type="common">Human</name>
    <dbReference type="NCBI Taxonomy" id="9606"/>
    <lineage>
        <taxon>Eukaryota</taxon>
        <taxon>Metazoa</taxon>
        <taxon>Chordata</taxon>
        <taxon>Craniata</taxon>
        <taxon>Vertebrata</taxon>
        <taxon>Euteleostomi</taxon>
        <taxon>Mammalia</taxon>
        <taxon>Eutheria</taxon>
        <taxon>Euarchontoglires</taxon>
        <taxon>Primates</taxon>
        <taxon>Haplorrhini</taxon>
        <taxon>Catarrhini</taxon>
        <taxon>Hominidae</taxon>
        <taxon>Homo</taxon>
    </lineage>
</organism>
<feature type="chain" id="PRO_0000457664" description="RNA polymerase II subunit A C-terminal domain phosphatase SSU72 like protein 2">
    <location>
        <begin position="1"/>
        <end position="194"/>
    </location>
</feature>
<name>S72L2_HUMAN</name>
<evidence type="ECO:0000250" key="1">
    <source>
        <dbReference type="UniProtKB" id="Q9NP77"/>
    </source>
</evidence>
<evidence type="ECO:0000305" key="2"/>
<evidence type="ECO:0000312" key="3">
    <source>
        <dbReference type="HGNC" id="HGNC:43621"/>
    </source>
</evidence>
<proteinExistence type="inferred from homology"/>